<organism>
    <name type="scientific">Apis mellifera ligustica</name>
    <name type="common">Common honeybee</name>
    <name type="synonym">Italian honeybee</name>
    <dbReference type="NCBI Taxonomy" id="7469"/>
    <lineage>
        <taxon>Eukaryota</taxon>
        <taxon>Metazoa</taxon>
        <taxon>Ecdysozoa</taxon>
        <taxon>Arthropoda</taxon>
        <taxon>Hexapoda</taxon>
        <taxon>Insecta</taxon>
        <taxon>Pterygota</taxon>
        <taxon>Neoptera</taxon>
        <taxon>Endopterygota</taxon>
        <taxon>Hymenoptera</taxon>
        <taxon>Apocrita</taxon>
        <taxon>Aculeata</taxon>
        <taxon>Apoidea</taxon>
        <taxon>Anthophila</taxon>
        <taxon>Apidae</taxon>
        <taxon>Apis</taxon>
    </lineage>
</organism>
<name>COX1_APILI</name>
<feature type="chain" id="PRO_0000183284" description="Cytochrome c oxidase subunit 1">
    <location>
        <begin position="1"/>
        <end position="521"/>
    </location>
</feature>
<feature type="transmembrane region" description="Helical" evidence="3">
    <location>
        <begin position="15"/>
        <end position="35"/>
    </location>
</feature>
<feature type="transmembrane region" description="Helical" evidence="3">
    <location>
        <begin position="61"/>
        <end position="81"/>
    </location>
</feature>
<feature type="transmembrane region" description="Helical" evidence="3">
    <location>
        <begin position="98"/>
        <end position="118"/>
    </location>
</feature>
<feature type="transmembrane region" description="Helical" evidence="3">
    <location>
        <begin position="143"/>
        <end position="163"/>
    </location>
</feature>
<feature type="transmembrane region" description="Helical" evidence="3">
    <location>
        <begin position="184"/>
        <end position="204"/>
    </location>
</feature>
<feature type="transmembrane region" description="Helical" evidence="3">
    <location>
        <begin position="232"/>
        <end position="252"/>
    </location>
</feature>
<feature type="transmembrane region" description="Helical" evidence="3">
    <location>
        <begin position="265"/>
        <end position="285"/>
    </location>
</feature>
<feature type="transmembrane region" description="Helical" evidence="3">
    <location>
        <begin position="303"/>
        <end position="323"/>
    </location>
</feature>
<feature type="transmembrane region" description="Helical" evidence="3">
    <location>
        <begin position="336"/>
        <end position="356"/>
    </location>
</feature>
<feature type="transmembrane region" description="Helical" evidence="3">
    <location>
        <begin position="383"/>
        <end position="403"/>
    </location>
</feature>
<feature type="transmembrane region" description="Helical" evidence="3">
    <location>
        <begin position="412"/>
        <end position="432"/>
    </location>
</feature>
<feature type="transmembrane region" description="Helical" evidence="3">
    <location>
        <begin position="451"/>
        <end position="471"/>
    </location>
</feature>
<feature type="binding site" evidence="2">
    <location>
        <position position="38"/>
    </location>
    <ligand>
        <name>Ca(2+)</name>
        <dbReference type="ChEBI" id="CHEBI:29108"/>
    </ligand>
</feature>
<feature type="binding site" evidence="2">
    <location>
        <position position="43"/>
    </location>
    <ligand>
        <name>Ca(2+)</name>
        <dbReference type="ChEBI" id="CHEBI:29108"/>
    </ligand>
</feature>
<feature type="binding site" description="axial binding residue" evidence="2">
    <location>
        <position position="59"/>
    </location>
    <ligand>
        <name>Fe(II)-heme a</name>
        <dbReference type="ChEBI" id="CHEBI:61715"/>
        <note>low-spin</note>
    </ligand>
    <ligandPart>
        <name>Fe</name>
        <dbReference type="ChEBI" id="CHEBI:18248"/>
    </ligandPart>
</feature>
<feature type="binding site" evidence="2">
    <location>
        <position position="238"/>
    </location>
    <ligand>
        <name>Cu cation</name>
        <dbReference type="ChEBI" id="CHEBI:23378"/>
        <label>B</label>
    </ligand>
</feature>
<feature type="binding site" evidence="1">
    <location>
        <position position="242"/>
    </location>
    <ligand>
        <name>O2</name>
        <dbReference type="ChEBI" id="CHEBI:15379"/>
    </ligand>
</feature>
<feature type="binding site" evidence="2">
    <location>
        <position position="288"/>
    </location>
    <ligand>
        <name>Cu cation</name>
        <dbReference type="ChEBI" id="CHEBI:23378"/>
        <label>B</label>
    </ligand>
</feature>
<feature type="binding site" evidence="2">
    <location>
        <position position="289"/>
    </location>
    <ligand>
        <name>Cu cation</name>
        <dbReference type="ChEBI" id="CHEBI:23378"/>
        <label>B</label>
    </ligand>
</feature>
<feature type="binding site" evidence="2">
    <location>
        <position position="366"/>
    </location>
    <ligand>
        <name>Mg(2+)</name>
        <dbReference type="ChEBI" id="CHEBI:18420"/>
        <note>ligand shared with subunit 2</note>
    </ligand>
</feature>
<feature type="binding site" evidence="2">
    <location>
        <position position="367"/>
    </location>
    <ligand>
        <name>Mg(2+)</name>
        <dbReference type="ChEBI" id="CHEBI:18420"/>
        <note>ligand shared with subunit 2</note>
    </ligand>
</feature>
<feature type="binding site" description="axial binding residue" evidence="2">
    <location>
        <position position="374"/>
    </location>
    <ligand>
        <name>heme a3</name>
        <dbReference type="ChEBI" id="CHEBI:83282"/>
        <note>high-spin</note>
    </ligand>
    <ligandPart>
        <name>Fe</name>
        <dbReference type="ChEBI" id="CHEBI:18248"/>
    </ligandPart>
</feature>
<feature type="binding site" description="axial binding residue" evidence="2">
    <location>
        <position position="376"/>
    </location>
    <ligand>
        <name>Fe(II)-heme a</name>
        <dbReference type="ChEBI" id="CHEBI:61715"/>
        <note>low-spin</note>
    </ligand>
    <ligandPart>
        <name>Fe</name>
        <dbReference type="ChEBI" id="CHEBI:18248"/>
    </ligandPart>
</feature>
<feature type="cross-link" description="1'-histidyl-3'-tyrosine (His-Tyr)" evidence="2">
    <location>
        <begin position="238"/>
        <end position="242"/>
    </location>
</feature>
<feature type="sequence variant" description="In strain: Isolate ligus8.">
    <original>F</original>
    <variation>L</variation>
    <location>
        <position position="108"/>
    </location>
</feature>
<feature type="sequence variant" description="In strain: Isolate ligus8.">
    <original>S</original>
    <variation>G</variation>
    <location>
        <position position="270"/>
    </location>
</feature>
<feature type="sequence variant" description="In strain: Isolate ligus2.">
    <original>M</original>
    <variation>I</variation>
    <location>
        <position position="271"/>
    </location>
</feature>
<feature type="sequence variant" description="In strain: Isolate ligus7.">
    <original>R</original>
    <variation>P</variation>
    <location>
        <position position="437"/>
    </location>
</feature>
<gene>
    <name type="primary">COI</name>
</gene>
<accession>P20374</accession>
<accession>Q8LUG0</accession>
<accession>Q8LXP4</accession>
<accession>Q8LXP6</accession>
<accession>Q8LXP7</accession>
<sequence>MMKWFMSTNHKNIGILYIILALWSGMLGSSMSLIIRMELSSPGSWISNDQIYNTIVTSHAFLMIFFMVMPFLIGGFGNWLIPLMLGSPDMAFPRMNNISFWLLPPSLFMLLLSNLFYPSPGTGWTVYPPLSAYLYHSSPSVDFAIFSLHMSGISSIMGSLNLMVTIMMMKNFSMNYDQISLFPWSVFITAILLIMSLPVLAGAITMLLFDRNFNTSFFDPMGGGDPILYQHLFWFFGHPEVYILILPGFGLISHIVMNESGKKEIFGNLSMIYAMLGIGFLGFIVWAHHMFTVGLDVDTRAYFTSATMIIAVPTGIKVFSWLATYHGSKLKLNISILWSLGFIMLFTIGGLTGIMLSNSSIDIILHDTYYVVGHFHYVLSMGAVFAIISSFIHWYPLITGLLLNIKWLKIQFIMMFIGVNLTFFPQHFLGLMSMPRRYSDYPDSYYCWNSISSMGSMISLNSMIFLIFIILESLISKRMLLFKFNQSSLEWLNFLPPLDHSHLEIPLLIKNLNLKSILIKF</sequence>
<protein>
    <recommendedName>
        <fullName>Cytochrome c oxidase subunit 1</fullName>
        <ecNumber>7.1.1.9</ecNumber>
    </recommendedName>
    <alternativeName>
        <fullName>Cytochrome c oxidase polypeptide I</fullName>
    </alternativeName>
</protein>
<dbReference type="EC" id="7.1.1.9"/>
<dbReference type="EMBL" id="M23409">
    <property type="protein sequence ID" value="AAA18476.1"/>
    <property type="molecule type" value="Genomic_DNA"/>
</dbReference>
<dbReference type="EMBL" id="L06178">
    <property type="protein sequence ID" value="AAB96799.1"/>
    <property type="molecule type" value="Genomic_DNA"/>
</dbReference>
<dbReference type="EMBL" id="AY114452">
    <property type="protein sequence ID" value="AAM76437.1"/>
    <property type="molecule type" value="Genomic_DNA"/>
</dbReference>
<dbReference type="EMBL" id="AY114453">
    <property type="protein sequence ID" value="AAM76438.1"/>
    <property type="molecule type" value="Genomic_DNA"/>
</dbReference>
<dbReference type="EMBL" id="AY114454">
    <property type="protein sequence ID" value="AAM76439.1"/>
    <property type="molecule type" value="Genomic_DNA"/>
</dbReference>
<dbReference type="EMBL" id="AY114455">
    <property type="protein sequence ID" value="AAM76440.1"/>
    <property type="molecule type" value="Genomic_DNA"/>
</dbReference>
<dbReference type="EMBL" id="AY114456">
    <property type="protein sequence ID" value="AAM76441.1"/>
    <property type="molecule type" value="Genomic_DNA"/>
</dbReference>
<dbReference type="EMBL" id="AY114457">
    <property type="protein sequence ID" value="AAM76442.1"/>
    <property type="molecule type" value="Genomic_DNA"/>
</dbReference>
<dbReference type="EMBL" id="AY114458">
    <property type="protein sequence ID" value="AAM76443.1"/>
    <property type="molecule type" value="Genomic_DNA"/>
</dbReference>
<dbReference type="EMBL" id="AY114460">
    <property type="protein sequence ID" value="AAM76445.1"/>
    <property type="molecule type" value="Genomic_DNA"/>
</dbReference>
<dbReference type="PIR" id="A32431">
    <property type="entry name" value="A32431"/>
</dbReference>
<dbReference type="RefSeq" id="NP_008083.1">
    <property type="nucleotide sequence ID" value="NC_001566.1"/>
</dbReference>
<dbReference type="SMR" id="P20374"/>
<dbReference type="CTD" id="4512"/>
<dbReference type="UniPathway" id="UPA00705"/>
<dbReference type="GO" id="GO:0005743">
    <property type="term" value="C:mitochondrial inner membrane"/>
    <property type="evidence" value="ECO:0007669"/>
    <property type="project" value="UniProtKB-SubCell"/>
</dbReference>
<dbReference type="GO" id="GO:0045277">
    <property type="term" value="C:respiratory chain complex IV"/>
    <property type="evidence" value="ECO:0007669"/>
    <property type="project" value="InterPro"/>
</dbReference>
<dbReference type="GO" id="GO:0004129">
    <property type="term" value="F:cytochrome-c oxidase activity"/>
    <property type="evidence" value="ECO:0007669"/>
    <property type="project" value="UniProtKB-EC"/>
</dbReference>
<dbReference type="GO" id="GO:0020037">
    <property type="term" value="F:heme binding"/>
    <property type="evidence" value="ECO:0007669"/>
    <property type="project" value="InterPro"/>
</dbReference>
<dbReference type="GO" id="GO:0046872">
    <property type="term" value="F:metal ion binding"/>
    <property type="evidence" value="ECO:0007669"/>
    <property type="project" value="UniProtKB-KW"/>
</dbReference>
<dbReference type="GO" id="GO:0015990">
    <property type="term" value="P:electron transport coupled proton transport"/>
    <property type="evidence" value="ECO:0007669"/>
    <property type="project" value="TreeGrafter"/>
</dbReference>
<dbReference type="GO" id="GO:0006123">
    <property type="term" value="P:mitochondrial electron transport, cytochrome c to oxygen"/>
    <property type="evidence" value="ECO:0007669"/>
    <property type="project" value="TreeGrafter"/>
</dbReference>
<dbReference type="CDD" id="cd01663">
    <property type="entry name" value="Cyt_c_Oxidase_I"/>
    <property type="match status" value="1"/>
</dbReference>
<dbReference type="FunFam" id="1.20.210.10:FF:000001">
    <property type="entry name" value="Cytochrome c oxidase subunit 1"/>
    <property type="match status" value="1"/>
</dbReference>
<dbReference type="Gene3D" id="1.20.210.10">
    <property type="entry name" value="Cytochrome c oxidase-like, subunit I domain"/>
    <property type="match status" value="1"/>
</dbReference>
<dbReference type="InterPro" id="IPR023616">
    <property type="entry name" value="Cyt_c_oxase-like_su1_dom"/>
</dbReference>
<dbReference type="InterPro" id="IPR036927">
    <property type="entry name" value="Cyt_c_oxase-like_su1_sf"/>
</dbReference>
<dbReference type="InterPro" id="IPR000883">
    <property type="entry name" value="Cyt_C_Oxase_1"/>
</dbReference>
<dbReference type="InterPro" id="IPR023615">
    <property type="entry name" value="Cyt_c_Oxase_su1_BS"/>
</dbReference>
<dbReference type="InterPro" id="IPR033944">
    <property type="entry name" value="Cyt_c_oxase_su1_dom"/>
</dbReference>
<dbReference type="PANTHER" id="PTHR10422">
    <property type="entry name" value="CYTOCHROME C OXIDASE SUBUNIT 1"/>
    <property type="match status" value="1"/>
</dbReference>
<dbReference type="PANTHER" id="PTHR10422:SF18">
    <property type="entry name" value="CYTOCHROME C OXIDASE SUBUNIT 1"/>
    <property type="match status" value="1"/>
</dbReference>
<dbReference type="Pfam" id="PF00115">
    <property type="entry name" value="COX1"/>
    <property type="match status" value="1"/>
</dbReference>
<dbReference type="PRINTS" id="PR01165">
    <property type="entry name" value="CYCOXIDASEI"/>
</dbReference>
<dbReference type="SUPFAM" id="SSF81442">
    <property type="entry name" value="Cytochrome c oxidase subunit I-like"/>
    <property type="match status" value="1"/>
</dbReference>
<dbReference type="PROSITE" id="PS50855">
    <property type="entry name" value="COX1"/>
    <property type="match status" value="1"/>
</dbReference>
<dbReference type="PROSITE" id="PS00077">
    <property type="entry name" value="COX1_CUB"/>
    <property type="match status" value="1"/>
</dbReference>
<keyword id="KW-0106">Calcium</keyword>
<keyword id="KW-0186">Copper</keyword>
<keyword id="KW-0249">Electron transport</keyword>
<keyword id="KW-0349">Heme</keyword>
<keyword id="KW-0408">Iron</keyword>
<keyword id="KW-0460">Magnesium</keyword>
<keyword id="KW-0472">Membrane</keyword>
<keyword id="KW-0479">Metal-binding</keyword>
<keyword id="KW-0496">Mitochondrion</keyword>
<keyword id="KW-0999">Mitochondrion inner membrane</keyword>
<keyword id="KW-0679">Respiratory chain</keyword>
<keyword id="KW-1278">Translocase</keyword>
<keyword id="KW-0812">Transmembrane</keyword>
<keyword id="KW-1133">Transmembrane helix</keyword>
<keyword id="KW-0813">Transport</keyword>
<evidence type="ECO:0000250" key="1">
    <source>
        <dbReference type="UniProtKB" id="P00396"/>
    </source>
</evidence>
<evidence type="ECO:0000250" key="2">
    <source>
        <dbReference type="UniProtKB" id="P00401"/>
    </source>
</evidence>
<evidence type="ECO:0000255" key="3"/>
<evidence type="ECO:0000305" key="4"/>
<proteinExistence type="inferred from homology"/>
<comment type="function">
    <text evidence="2">Component of the cytochrome c oxidase, the last enzyme in the mitochondrial electron transport chain which drives oxidative phosphorylation. The respiratory chain contains 3 multisubunit complexes succinate dehydrogenase (complex II, CII), ubiquinol-cytochrome c oxidoreductase (cytochrome b-c1 complex, complex III, CIII) and cytochrome c oxidase (complex IV, CIV), that cooperate to transfer electrons derived from NADH and succinate to molecular oxygen, creating an electrochemical gradient over the inner membrane that drives transmembrane transport and the ATP synthase. Cytochrome c oxidase is the component of the respiratory chain that catalyzes the reduction of oxygen to water. Electrons originating from reduced cytochrome c in the intermembrane space (IMS) are transferred via the dinuclear copper A center (CU(A)) of subunit 2 and heme A of subunit 1 to the active site in subunit 1, a binuclear center (BNC) formed by heme A3 and copper B (CU(B)). The BNC reduces molecular oxygen to 2 water molecules using 4 electrons from cytochrome c in the IMS and 4 protons from the mitochondrial matrix.</text>
</comment>
<comment type="catalytic activity">
    <reaction evidence="2">
        <text>4 Fe(II)-[cytochrome c] + O2 + 8 H(+)(in) = 4 Fe(III)-[cytochrome c] + 2 H2O + 4 H(+)(out)</text>
        <dbReference type="Rhea" id="RHEA:11436"/>
        <dbReference type="Rhea" id="RHEA-COMP:10350"/>
        <dbReference type="Rhea" id="RHEA-COMP:14399"/>
        <dbReference type="ChEBI" id="CHEBI:15377"/>
        <dbReference type="ChEBI" id="CHEBI:15378"/>
        <dbReference type="ChEBI" id="CHEBI:15379"/>
        <dbReference type="ChEBI" id="CHEBI:29033"/>
        <dbReference type="ChEBI" id="CHEBI:29034"/>
        <dbReference type="EC" id="7.1.1.9"/>
    </reaction>
    <physiologicalReaction direction="left-to-right" evidence="2">
        <dbReference type="Rhea" id="RHEA:11437"/>
    </physiologicalReaction>
</comment>
<comment type="cofactor">
    <cofactor evidence="2">
        <name>heme</name>
        <dbReference type="ChEBI" id="CHEBI:30413"/>
    </cofactor>
    <text evidence="2">Binds 2 heme A groups non-covalently per subunit.</text>
</comment>
<comment type="cofactor">
    <cofactor evidence="2">
        <name>Cu cation</name>
        <dbReference type="ChEBI" id="CHEBI:23378"/>
    </cofactor>
    <text evidence="2">Binds a copper B center.</text>
</comment>
<comment type="pathway">
    <text evidence="2">Energy metabolism; oxidative phosphorylation.</text>
</comment>
<comment type="subunit">
    <text evidence="2">Component of the cytochrome c oxidase (complex IV, CIV), a multisubunit enzyme composed of a catalytic core of 3 subunits and several supernumerary subunits. The complex exists as a monomer or a dimer and forms supercomplexes (SCs) in the inner mitochondrial membrane with ubiquinol-cytochrome c oxidoreductase (cytochrome b-c1 complex, complex III, CIII).</text>
</comment>
<comment type="subcellular location">
    <subcellularLocation>
        <location evidence="2">Mitochondrion inner membrane</location>
        <topology evidence="2">Multi-pass membrane protein</topology>
    </subcellularLocation>
</comment>
<comment type="similarity">
    <text evidence="4">Belongs to the heme-copper respiratory oxidase family.</text>
</comment>
<reference key="1">
    <citation type="journal article" date="1989" name="Mol. Biol. Evol.">
        <title>The CO-I and CO-II region of honeybee mitochondrial DNA: evidence for variation in insect mitochondrial evolutionary rates.</title>
        <authorList>
            <person name="Crozier R.H."/>
            <person name="Crozier Y.C."/>
            <person name="Mackinlay A.G."/>
        </authorList>
    </citation>
    <scope>NUCLEOTIDE SEQUENCE [GENOMIC DNA]</scope>
    <source>
        <tissue>Thorax</tissue>
    </source>
</reference>
<reference key="2">
    <citation type="journal article" date="1993" name="Genetics">
        <title>The mitochondrial genome of the honeybee Apis mellifera: complete sequence and genome organization.</title>
        <authorList>
            <person name="Crozier R.H."/>
            <person name="Crozier Y.C."/>
        </authorList>
    </citation>
    <scope>NUCLEOTIDE SEQUENCE [GENOMIC DNA]</scope>
    <source>
        <tissue>Thorax</tissue>
    </source>
</reference>
<reference key="3">
    <citation type="submission" date="2002-05" db="EMBL/GenBank/DDBJ databases">
        <title>ND2 and CO1 mitochondrial genes in Apis mellifera L.: a molecular approach to Mediterranean populations monitoring.</title>
        <authorList>
            <person name="Marino A."/>
            <person name="Mantovani B."/>
            <person name="Carpana E."/>
            <person name="Sabatini A.G."/>
            <person name="Lodesani M."/>
        </authorList>
    </citation>
    <scope>NUCLEOTIDE SEQUENCE [GENOMIC DNA] OF 93-507</scope>
    <source>
        <strain>Isolate ligus2</strain>
        <strain>Isolate ligus3</strain>
        <strain>Isolate ligus4</strain>
        <strain>Isolate ligus5</strain>
        <strain>Isolate ligus6</strain>
        <strain>Isolate ligus7</strain>
        <strain>Isolate ligus8</strain>
        <strain>Isolate ligus9</strain>
    </source>
</reference>
<reference key="4">
    <citation type="journal article" date="1991" name="Genetics">
        <title>Putative origin and function of the intergenic region between COI and COII of Apis mellifera L. mitochondrial DNA.</title>
        <authorList>
            <person name="Cornuet J.-M."/>
            <person name="Garnery L."/>
            <person name="Solignac M."/>
        </authorList>
    </citation>
    <scope>NUCLEOTIDE SEQUENCE [GENOMIC DNA] OF 338-521</scope>
</reference>
<geneLocation type="mitochondrion"/>